<comment type="function">
    <text evidence="1">E3 UFM1-protein ligase that mediates ufmylation of target proteins.</text>
</comment>
<comment type="similarity">
    <text evidence="3">Belongs to the UFL1 family.</text>
</comment>
<protein>
    <recommendedName>
        <fullName>E3 UFM1-protein ligase 1 homolog</fullName>
        <ecNumber>2.3.2.-</ecNumber>
    </recommendedName>
    <alternativeName>
        <fullName evidence="3">E3 UFM1-protein transferase 1 homolog</fullName>
    </alternativeName>
</protein>
<proteinExistence type="inferred from homology"/>
<dbReference type="EC" id="2.3.2.-"/>
<dbReference type="EMBL" id="CM000160">
    <property type="protein sequence ID" value="EDW96424.1"/>
    <property type="molecule type" value="Genomic_DNA"/>
</dbReference>
<dbReference type="RefSeq" id="XP_002096712.1">
    <property type="nucleotide sequence ID" value="XM_002096676.2"/>
</dbReference>
<dbReference type="SMR" id="B4PS24"/>
<dbReference type="EnsemblMetazoa" id="FBtr0272341">
    <property type="protein sequence ID" value="FBpp0270833"/>
    <property type="gene ID" value="FBgn0242873"/>
</dbReference>
<dbReference type="GeneID" id="6536104"/>
<dbReference type="KEGG" id="dya:Dyak_GE25823"/>
<dbReference type="CTD" id="23376"/>
<dbReference type="eggNOG" id="KOG2235">
    <property type="taxonomic scope" value="Eukaryota"/>
</dbReference>
<dbReference type="HOGENOM" id="CLU_012417_1_1_1"/>
<dbReference type="OMA" id="CILHASG"/>
<dbReference type="OrthoDB" id="10258297at2759"/>
<dbReference type="PhylomeDB" id="B4PS24"/>
<dbReference type="Proteomes" id="UP000002282">
    <property type="component" value="Chromosome 3R"/>
</dbReference>
<dbReference type="GO" id="GO:0005789">
    <property type="term" value="C:endoplasmic reticulum membrane"/>
    <property type="evidence" value="ECO:0007669"/>
    <property type="project" value="TreeGrafter"/>
</dbReference>
<dbReference type="GO" id="GO:0061666">
    <property type="term" value="F:UFM1 ligase activity"/>
    <property type="evidence" value="ECO:0007669"/>
    <property type="project" value="EnsemblMetazoa"/>
</dbReference>
<dbReference type="GO" id="GO:1990592">
    <property type="term" value="P:protein K69-linked ufmylation"/>
    <property type="evidence" value="ECO:0007669"/>
    <property type="project" value="TreeGrafter"/>
</dbReference>
<dbReference type="GO" id="GO:0032434">
    <property type="term" value="P:regulation of proteasomal ubiquitin-dependent protein catabolic process"/>
    <property type="evidence" value="ECO:0007669"/>
    <property type="project" value="TreeGrafter"/>
</dbReference>
<dbReference type="GO" id="GO:0034976">
    <property type="term" value="P:response to endoplasmic reticulum stress"/>
    <property type="evidence" value="ECO:0007669"/>
    <property type="project" value="TreeGrafter"/>
</dbReference>
<dbReference type="InterPro" id="IPR018611">
    <property type="entry name" value="Ufl1"/>
</dbReference>
<dbReference type="InterPro" id="IPR056761">
    <property type="entry name" value="Ufl1-like_C"/>
</dbReference>
<dbReference type="InterPro" id="IPR056580">
    <property type="entry name" value="Ufl1_dom"/>
</dbReference>
<dbReference type="InterPro" id="IPR056579">
    <property type="entry name" value="Ufl1_N"/>
</dbReference>
<dbReference type="PANTHER" id="PTHR31057">
    <property type="entry name" value="E3 UFM1-PROTEIN LIGASE 1"/>
    <property type="match status" value="1"/>
</dbReference>
<dbReference type="PANTHER" id="PTHR31057:SF0">
    <property type="entry name" value="E3 UFM1-PROTEIN LIGASE 1"/>
    <property type="match status" value="1"/>
</dbReference>
<dbReference type="Pfam" id="PF09743">
    <property type="entry name" value="E3_UFM1_ligase"/>
    <property type="match status" value="1"/>
</dbReference>
<dbReference type="Pfam" id="PF23659">
    <property type="entry name" value="UFL1"/>
    <property type="match status" value="1"/>
</dbReference>
<dbReference type="Pfam" id="PF25041">
    <property type="entry name" value="UFL1_C"/>
    <property type="match status" value="1"/>
</dbReference>
<gene>
    <name type="ORF">GE25823</name>
</gene>
<feature type="chain" id="PRO_0000391890" description="E3 UFM1-protein ligase 1 homolog">
    <location>
        <begin position="1"/>
        <end position="784"/>
    </location>
</feature>
<feature type="region of interest" description="Disordered" evidence="2">
    <location>
        <begin position="405"/>
        <end position="480"/>
    </location>
</feature>
<feature type="compositionally biased region" description="Basic residues" evidence="2">
    <location>
        <begin position="444"/>
        <end position="454"/>
    </location>
</feature>
<evidence type="ECO:0000250" key="1">
    <source>
        <dbReference type="UniProtKB" id="O94874"/>
    </source>
</evidence>
<evidence type="ECO:0000256" key="2">
    <source>
        <dbReference type="SAM" id="MobiDB-lite"/>
    </source>
</evidence>
<evidence type="ECO:0000305" key="3"/>
<reference key="1">
    <citation type="journal article" date="2007" name="Nature">
        <title>Evolution of genes and genomes on the Drosophila phylogeny.</title>
        <authorList>
            <consortium name="Drosophila 12 genomes consortium"/>
        </authorList>
    </citation>
    <scope>NUCLEOTIDE SEQUENCE [LARGE SCALE GENOMIC DNA]</scope>
    <source>
        <strain>Tai18E2 / Tucson 14021-0261.01</strain>
    </source>
</reference>
<name>UFL1_DROYA</name>
<organism>
    <name type="scientific">Drosophila yakuba</name>
    <name type="common">Fruit fly</name>
    <dbReference type="NCBI Taxonomy" id="7245"/>
    <lineage>
        <taxon>Eukaryota</taxon>
        <taxon>Metazoa</taxon>
        <taxon>Ecdysozoa</taxon>
        <taxon>Arthropoda</taxon>
        <taxon>Hexapoda</taxon>
        <taxon>Insecta</taxon>
        <taxon>Pterygota</taxon>
        <taxon>Neoptera</taxon>
        <taxon>Endopterygota</taxon>
        <taxon>Diptera</taxon>
        <taxon>Brachycera</taxon>
        <taxon>Muscomorpha</taxon>
        <taxon>Ephydroidea</taxon>
        <taxon>Drosophilidae</taxon>
        <taxon>Drosophila</taxon>
        <taxon>Sophophora</taxon>
    </lineage>
</organism>
<sequence>MGSGDWDEIKRLAADFQKAQLTSTLQKLSERNCVEIVTLLLEKQMLEVVFTNDGKEYITPDHLEREIQDELYVNGGRANLVEVSKTLNVDLSRIEVLAERIAAENPSVHLVLGQLIDEDYISHIAQEINEKLVLRGEISISELASQFDLPSDFLQHDVVEKHLGKIIKGRQDASNPRVFFTQAYIQRCKAKIRGALAAITRPINVAVILQQIGVQEKIFHSLLDEIAPAGQVTSKLANSQYVPLIYAKTQADWVNSFYKQNSFLEYDAIQKLGISDAKSYIRKQFPNEEFLFLKRVALGARLVELTVVTALNECSATKQYLDLTTILPSNLSEEDIEEVFSTIMGQKHSNPNNFVYLDSIVFSQPYLAQLVQPCQALAESQAKAAVDGGVYQQYIVEKTLAQKGSVSTQELEDDGKVDKRDERRKKASSGKAGGGAQGRETKTKSTKKHQRGKAAAHNDSDDEDDVQQSSRGGGAGNKKAMKPLELVKTADIVKLITASLEEEGLEHLAKPISALYTNQFNQTALARAQELFEATPQTNRRQTHAAIQDRINTFLIDIRLYEKGLKLFPLETQTQLVKYLLKSLGNDICNELSLYVAGECNLTVKNTNLNVDQRIKLAQECEVQYRASLLEQNKALNKTIDEFELATETVLKACSMIIKKVDKKKDRLLIADHKKKLQNQLLECQEPALLLHLAVLILFTTITGSILHASGKFVSAILQHIRGSLNDEQNALLLRYHDLVLQVLQATPDSSESKVANEHLQAMQVQVVELAQNFSRASVFKADC</sequence>
<accession>B4PS24</accession>
<keyword id="KW-0808">Transferase</keyword>
<keyword id="KW-0833">Ubl conjugation pathway</keyword>